<organism>
    <name type="scientific">Elaphe climacophora</name>
    <name type="common">Japanese rat snake</name>
    <name type="synonym">Coluber climacophorus</name>
    <dbReference type="NCBI Taxonomy" id="31143"/>
    <lineage>
        <taxon>Eukaryota</taxon>
        <taxon>Metazoa</taxon>
        <taxon>Chordata</taxon>
        <taxon>Craniata</taxon>
        <taxon>Vertebrata</taxon>
        <taxon>Euteleostomi</taxon>
        <taxon>Lepidosauria</taxon>
        <taxon>Squamata</taxon>
        <taxon>Bifurcata</taxon>
        <taxon>Unidentata</taxon>
        <taxon>Episquamata</taxon>
        <taxon>Toxicofera</taxon>
        <taxon>Serpentes</taxon>
        <taxon>Colubroidea</taxon>
        <taxon>Colubridae</taxon>
        <taxon>Colubrinae</taxon>
        <taxon>Elaphe</taxon>
    </lineage>
</organism>
<sequence length="332" mass="37244">MKSSVPSLLFVSLVMSLNSYTQQVLYCPPDPAPENITEFVCNSPSLHEFPTGFPVRTKIISVEFTQVSSLGVEALQGLPNLQELHLSNNRLKTLPSGLFRNLPELHTLDLSTNLLEDLPPEIFTSTTSLTLLSISENRLAKLRLSWFETLKELRILSLDNNQLKEVPISCFDKLEKLTFLDLSSNHLHRLSPDMFSGLDNLERLSLENNPIRCIAPKSFHGRPKLSIISLKNCSLTNIITGVFQPLNHXVLLDLSDNELTMLDPPVAIPSANLSLDLTGNPWACNCRMDNLLTWVKEHKIDLYSKQEIVCAFPKSFKGEEATSLHRSQICPC</sequence>
<reference key="1">
    <citation type="journal article" date="2009" name="Toxicon">
        <title>Identification and characterization of phospholipase A2 inhibitors from the serum of the Japanese rat snake, Elaphe climacophora.</title>
        <authorList>
            <person name="Shirai R."/>
            <person name="Toriba M."/>
            <person name="Hayashi K."/>
            <person name="Ikeda K."/>
            <person name="Inoue S."/>
        </authorList>
    </citation>
    <scope>NUCLEOTIDE SEQUENCE [MRNA]</scope>
    <scope>PROTEIN SEQUENCE OF 24-30</scope>
    <scope>SUBCELLULAR LOCATION</scope>
    <scope>SUBUNIT</scope>
    <source>
        <tissue>Liver</tissue>
        <tissue>Serum</tissue>
    </source>
</reference>
<proteinExistence type="evidence at protein level"/>
<evidence type="ECO:0000255" key="1"/>
<evidence type="ECO:0000255" key="2">
    <source>
        <dbReference type="PROSITE-ProRule" id="PRU00498"/>
    </source>
</evidence>
<evidence type="ECO:0000269" key="3">
    <source>
    </source>
</evidence>
<evidence type="ECO:0000303" key="4">
    <source>
    </source>
</evidence>
<evidence type="ECO:0000305" key="5"/>
<evidence type="ECO:0000305" key="6">
    <source>
    </source>
</evidence>
<accession>C0STK7</accession>
<comment type="function">
    <text evidence="3">Inhibits the enzymatic activity of the basic phospholipase A2 (PLA2).</text>
</comment>
<comment type="subunit">
    <text evidence="3">Homotrimer.</text>
</comment>
<comment type="subcellular location">
    <subcellularLocation>
        <location evidence="3">Secreted</location>
    </subcellularLocation>
    <text evidence="3">Secreted in plasma.</text>
</comment>
<comment type="miscellaneous">
    <text evidence="3">Concentration of this protein in the serum is 8-fold lower than in the E.quadrivirgata (another non-venomous snake) serum. This difference may reflect the difference in the food habits of these snakes. E.quadrivirgata preys upon snakes including the venomous snakes, whereas E.climacophora only preys upon small mammals and birds.</text>
</comment>
<comment type="similarity">
    <text evidence="5">Belongs to the beta-type phospholipase A2 inhibitor family.</text>
</comment>
<dbReference type="EMBL" id="AB462511">
    <property type="protein sequence ID" value="BAH47549.1"/>
    <property type="molecule type" value="mRNA"/>
</dbReference>
<dbReference type="GO" id="GO:0005576">
    <property type="term" value="C:extracellular region"/>
    <property type="evidence" value="ECO:0007669"/>
    <property type="project" value="UniProtKB-SubCell"/>
</dbReference>
<dbReference type="GO" id="GO:0019834">
    <property type="term" value="F:phospholipase A2 inhibitor activity"/>
    <property type="evidence" value="ECO:0007669"/>
    <property type="project" value="UniProtKB-KW"/>
</dbReference>
<dbReference type="FunFam" id="3.80.10.10:FF:001164">
    <property type="entry name" value="GH01279p"/>
    <property type="match status" value="1"/>
</dbReference>
<dbReference type="Gene3D" id="3.80.10.10">
    <property type="entry name" value="Ribonuclease Inhibitor"/>
    <property type="match status" value="2"/>
</dbReference>
<dbReference type="InterPro" id="IPR000483">
    <property type="entry name" value="Cys-rich_flank_reg_C"/>
</dbReference>
<dbReference type="InterPro" id="IPR001611">
    <property type="entry name" value="Leu-rich_rpt"/>
</dbReference>
<dbReference type="InterPro" id="IPR003591">
    <property type="entry name" value="Leu-rich_rpt_typical-subtyp"/>
</dbReference>
<dbReference type="InterPro" id="IPR032675">
    <property type="entry name" value="LRR_dom_sf"/>
</dbReference>
<dbReference type="PANTHER" id="PTHR24366">
    <property type="entry name" value="IG(IMMUNOGLOBULIN) AND LRR(LEUCINE RICH REPEAT) DOMAINS"/>
    <property type="match status" value="1"/>
</dbReference>
<dbReference type="PANTHER" id="PTHR24366:SF96">
    <property type="entry name" value="LEUCINE RICH REPEAT CONTAINING 53"/>
    <property type="match status" value="1"/>
</dbReference>
<dbReference type="Pfam" id="PF00560">
    <property type="entry name" value="LRR_1"/>
    <property type="match status" value="1"/>
</dbReference>
<dbReference type="Pfam" id="PF13855">
    <property type="entry name" value="LRR_8"/>
    <property type="match status" value="2"/>
</dbReference>
<dbReference type="PRINTS" id="PR00019">
    <property type="entry name" value="LEURICHRPT"/>
</dbReference>
<dbReference type="SMART" id="SM00364">
    <property type="entry name" value="LRR_BAC"/>
    <property type="match status" value="3"/>
</dbReference>
<dbReference type="SMART" id="SM00365">
    <property type="entry name" value="LRR_SD22"/>
    <property type="match status" value="4"/>
</dbReference>
<dbReference type="SMART" id="SM00369">
    <property type="entry name" value="LRR_TYP"/>
    <property type="match status" value="6"/>
</dbReference>
<dbReference type="SMART" id="SM00082">
    <property type="entry name" value="LRRCT"/>
    <property type="match status" value="1"/>
</dbReference>
<dbReference type="SUPFAM" id="SSF52058">
    <property type="entry name" value="L domain-like"/>
    <property type="match status" value="1"/>
</dbReference>
<dbReference type="PROSITE" id="PS51450">
    <property type="entry name" value="LRR"/>
    <property type="match status" value="7"/>
</dbReference>
<feature type="signal peptide" evidence="3">
    <location>
        <begin position="1"/>
        <end position="23"/>
    </location>
</feature>
<feature type="chain" id="PRO_5002903549" description="Phospholipase A2 inhibitor beta" evidence="6">
    <location>
        <begin position="24"/>
        <end position="332"/>
    </location>
</feature>
<feature type="repeat" description="LRR 1" evidence="1">
    <location>
        <begin position="78"/>
        <end position="101"/>
    </location>
</feature>
<feature type="repeat" description="LRR 2" evidence="1">
    <location>
        <begin position="103"/>
        <end position="125"/>
    </location>
</feature>
<feature type="repeat" description="LRR 3" evidence="1">
    <location>
        <begin position="127"/>
        <end position="149"/>
    </location>
</feature>
<feature type="repeat" description="LRR 4" evidence="1">
    <location>
        <begin position="150"/>
        <end position="173"/>
    </location>
</feature>
<feature type="repeat" description="LRR 5" evidence="1">
    <location>
        <begin position="175"/>
        <end position="197"/>
    </location>
</feature>
<feature type="repeat" description="LRR 6" evidence="1">
    <location>
        <begin position="198"/>
        <end position="221"/>
    </location>
</feature>
<feature type="repeat" description="LRR 7" evidence="1">
    <location>
        <begin position="223"/>
        <end position="245"/>
    </location>
</feature>
<feature type="repeat" description="LRR 8" evidence="1">
    <location>
        <begin position="247"/>
        <end position="269"/>
    </location>
</feature>
<feature type="domain" description="LRRCT" evidence="1">
    <location>
        <begin position="280"/>
        <end position="331"/>
    </location>
</feature>
<feature type="glycosylation site" description="N-linked (GlcNAc...) asparagine" evidence="2">
    <location>
        <position position="35"/>
    </location>
</feature>
<feature type="glycosylation site" description="N-linked (GlcNAc...) asparagine" evidence="2">
    <location>
        <position position="232"/>
    </location>
</feature>
<feature type="glycosylation site" description="N-linked (GlcNAc...) asparagine" evidence="2">
    <location>
        <position position="272"/>
    </location>
</feature>
<name>PLIB_ELACL</name>
<keyword id="KW-0903">Direct protein sequencing</keyword>
<keyword id="KW-0325">Glycoprotein</keyword>
<keyword id="KW-0433">Leucine-rich repeat</keyword>
<keyword id="KW-0593">Phospholipase A2 inhibitor</keyword>
<keyword id="KW-0677">Repeat</keyword>
<keyword id="KW-0964">Secreted</keyword>
<keyword id="KW-0732">Signal</keyword>
<protein>
    <recommendedName>
        <fullName evidence="4">Phospholipase A2 inhibitor beta</fullName>
        <shortName evidence="4">PLI-beta</shortName>
        <shortName>beta-PLI</shortName>
    </recommendedName>
</protein>